<protein>
    <recommendedName>
        <fullName evidence="1">Polyribonucleotide nucleotidyltransferase</fullName>
        <ecNumber evidence="1">2.7.7.8</ecNumber>
    </recommendedName>
    <alternativeName>
        <fullName evidence="1">Polynucleotide phosphorylase</fullName>
        <shortName evidence="1">PNPase</shortName>
    </alternativeName>
</protein>
<organism>
    <name type="scientific">Enterococcus faecalis (strain ATCC 700802 / V583)</name>
    <dbReference type="NCBI Taxonomy" id="226185"/>
    <lineage>
        <taxon>Bacteria</taxon>
        <taxon>Bacillati</taxon>
        <taxon>Bacillota</taxon>
        <taxon>Bacilli</taxon>
        <taxon>Lactobacillales</taxon>
        <taxon>Enterococcaceae</taxon>
        <taxon>Enterococcus</taxon>
    </lineage>
</organism>
<keyword id="KW-0963">Cytoplasm</keyword>
<keyword id="KW-0460">Magnesium</keyword>
<keyword id="KW-0479">Metal-binding</keyword>
<keyword id="KW-0548">Nucleotidyltransferase</keyword>
<keyword id="KW-1185">Reference proteome</keyword>
<keyword id="KW-0694">RNA-binding</keyword>
<keyword id="KW-0808">Transferase</keyword>
<name>PNP_ENTFA</name>
<proteinExistence type="inferred from homology"/>
<sequence length="704" mass="77048">MTEKQVFKTTWGGRPLEVEIGQLAKQANGAVLVRYGDTVVLSAAVASKEAKDVDFFPLTVNYEEKMYAVGKIPGGFIKREGRPSERATLTARLIDRPIRPMFSEGFRNEVQITNIVMSVEQDCTPEMAAMFGSSLALAISDIPFDGPIAGVDVGRINGEYVLNPTVEQAEQTDIELTVAGTKEAINMVESGAKEVSEEDMLGALLFGFDAIKELVAFQEEIVAAVGKPKMDVDLLQVDADLKKEIFDAYYNTMKTAVMTEEKLAREVEIDKVKDTVKEVYAEKFSEHEEEAQLLKEVKQIAEDLEKDVVRELITIDKIRPDGRKLDEIRHLSSEVSILPRVHGSGLFTRGQTQALSVCTLAPLGEHQIIDGLGVQDSKRFIHHYNFPQFSVGSTGRAGSPGRREIGHGALGERALAQIIPSEEDFPYTIRLVAEVLESNGSSSQASICAGTLALMDAGVPIKAPVAGIAMGLVSDGENYTILTDIQGLEDHLGDMDFKVAGTKDGITALQMDIKIQGITEQILTEALDQAKKARMEILEELTTTIAAPREELSQYAPKIEMIQIKPAKIKDVIGKGGETINSIIDETGVKIDIDQDGNVSIASSDAEMIKKAIKIIEELTKEVEVGQVYLAKVVRIEKFGAFVNLIKGKDGLIHISQLANERVNNVEDVVKLGDEVLVKVTEIDKQGRVNVSRKALLNEENKEK</sequence>
<accession>Q82ZJ2</accession>
<comment type="function">
    <text evidence="1">Involved in mRNA degradation. Catalyzes the phosphorolysis of single-stranded polyribonucleotides processively in the 3'- to 5'-direction.</text>
</comment>
<comment type="catalytic activity">
    <reaction evidence="1">
        <text>RNA(n+1) + phosphate = RNA(n) + a ribonucleoside 5'-diphosphate</text>
        <dbReference type="Rhea" id="RHEA:22096"/>
        <dbReference type="Rhea" id="RHEA-COMP:14527"/>
        <dbReference type="Rhea" id="RHEA-COMP:17342"/>
        <dbReference type="ChEBI" id="CHEBI:43474"/>
        <dbReference type="ChEBI" id="CHEBI:57930"/>
        <dbReference type="ChEBI" id="CHEBI:140395"/>
        <dbReference type="EC" id="2.7.7.8"/>
    </reaction>
</comment>
<comment type="cofactor">
    <cofactor evidence="1">
        <name>Mg(2+)</name>
        <dbReference type="ChEBI" id="CHEBI:18420"/>
    </cofactor>
</comment>
<comment type="subcellular location">
    <subcellularLocation>
        <location evidence="1">Cytoplasm</location>
    </subcellularLocation>
</comment>
<comment type="similarity">
    <text evidence="1">Belongs to the polyribonucleotide nucleotidyltransferase family.</text>
</comment>
<evidence type="ECO:0000255" key="1">
    <source>
        <dbReference type="HAMAP-Rule" id="MF_01595"/>
    </source>
</evidence>
<reference key="1">
    <citation type="journal article" date="2003" name="Science">
        <title>Role of mobile DNA in the evolution of vancomycin-resistant Enterococcus faecalis.</title>
        <authorList>
            <person name="Paulsen I.T."/>
            <person name="Banerjei L."/>
            <person name="Myers G.S.A."/>
            <person name="Nelson K.E."/>
            <person name="Seshadri R."/>
            <person name="Read T.D."/>
            <person name="Fouts D.E."/>
            <person name="Eisen J.A."/>
            <person name="Gill S.R."/>
            <person name="Heidelberg J.F."/>
            <person name="Tettelin H."/>
            <person name="Dodson R.J."/>
            <person name="Umayam L.A."/>
            <person name="Brinkac L.M."/>
            <person name="Beanan M.J."/>
            <person name="Daugherty S.C."/>
            <person name="DeBoy R.T."/>
            <person name="Durkin S.A."/>
            <person name="Kolonay J.F."/>
            <person name="Madupu R."/>
            <person name="Nelson W.C."/>
            <person name="Vamathevan J.J."/>
            <person name="Tran B."/>
            <person name="Upton J."/>
            <person name="Hansen T."/>
            <person name="Shetty J."/>
            <person name="Khouri H.M."/>
            <person name="Utterback T.R."/>
            <person name="Radune D."/>
            <person name="Ketchum K.A."/>
            <person name="Dougherty B.A."/>
            <person name="Fraser C.M."/>
        </authorList>
    </citation>
    <scope>NUCLEOTIDE SEQUENCE [LARGE SCALE GENOMIC DNA]</scope>
    <source>
        <strain>ATCC 700802 / V583</strain>
    </source>
</reference>
<gene>
    <name evidence="1" type="primary">pnp</name>
    <name type="ordered locus">EF_3064</name>
</gene>
<feature type="chain" id="PRO_0000329636" description="Polyribonucleotide nucleotidyltransferase">
    <location>
        <begin position="1"/>
        <end position="704"/>
    </location>
</feature>
<feature type="domain" description="KH" evidence="1">
    <location>
        <begin position="557"/>
        <end position="616"/>
    </location>
</feature>
<feature type="domain" description="S1 motif" evidence="1">
    <location>
        <begin position="626"/>
        <end position="694"/>
    </location>
</feature>
<feature type="binding site" evidence="1">
    <location>
        <position position="490"/>
    </location>
    <ligand>
        <name>Mg(2+)</name>
        <dbReference type="ChEBI" id="CHEBI:18420"/>
    </ligand>
</feature>
<feature type="binding site" evidence="1">
    <location>
        <position position="496"/>
    </location>
    <ligand>
        <name>Mg(2+)</name>
        <dbReference type="ChEBI" id="CHEBI:18420"/>
    </ligand>
</feature>
<dbReference type="EC" id="2.7.7.8" evidence="1"/>
<dbReference type="EMBL" id="AE016830">
    <property type="protein sequence ID" value="AAO82746.1"/>
    <property type="molecule type" value="Genomic_DNA"/>
</dbReference>
<dbReference type="RefSeq" id="NP_816676.1">
    <property type="nucleotide sequence ID" value="NC_004668.1"/>
</dbReference>
<dbReference type="RefSeq" id="WP_002378800.1">
    <property type="nucleotide sequence ID" value="NZ_KE136524.1"/>
</dbReference>
<dbReference type="SMR" id="Q82ZJ2"/>
<dbReference type="STRING" id="226185.EF_3064"/>
<dbReference type="DNASU" id="1201910"/>
<dbReference type="EnsemblBacteria" id="AAO82746">
    <property type="protein sequence ID" value="AAO82746"/>
    <property type="gene ID" value="EF_3064"/>
</dbReference>
<dbReference type="KEGG" id="efa:EF3064"/>
<dbReference type="PATRIC" id="fig|226185.45.peg.507"/>
<dbReference type="eggNOG" id="COG1185">
    <property type="taxonomic scope" value="Bacteria"/>
</dbReference>
<dbReference type="HOGENOM" id="CLU_004217_2_2_9"/>
<dbReference type="Proteomes" id="UP000001415">
    <property type="component" value="Chromosome"/>
</dbReference>
<dbReference type="GO" id="GO:0005829">
    <property type="term" value="C:cytosol"/>
    <property type="evidence" value="ECO:0007669"/>
    <property type="project" value="TreeGrafter"/>
</dbReference>
<dbReference type="GO" id="GO:0000175">
    <property type="term" value="F:3'-5'-RNA exonuclease activity"/>
    <property type="evidence" value="ECO:0007669"/>
    <property type="project" value="TreeGrafter"/>
</dbReference>
<dbReference type="GO" id="GO:0000287">
    <property type="term" value="F:magnesium ion binding"/>
    <property type="evidence" value="ECO:0007669"/>
    <property type="project" value="UniProtKB-UniRule"/>
</dbReference>
<dbReference type="GO" id="GO:0004654">
    <property type="term" value="F:polyribonucleotide nucleotidyltransferase activity"/>
    <property type="evidence" value="ECO:0007669"/>
    <property type="project" value="UniProtKB-UniRule"/>
</dbReference>
<dbReference type="GO" id="GO:0003723">
    <property type="term" value="F:RNA binding"/>
    <property type="evidence" value="ECO:0007669"/>
    <property type="project" value="UniProtKB-UniRule"/>
</dbReference>
<dbReference type="GO" id="GO:0006402">
    <property type="term" value="P:mRNA catabolic process"/>
    <property type="evidence" value="ECO:0007669"/>
    <property type="project" value="UniProtKB-UniRule"/>
</dbReference>
<dbReference type="GO" id="GO:0006396">
    <property type="term" value="P:RNA processing"/>
    <property type="evidence" value="ECO:0007669"/>
    <property type="project" value="InterPro"/>
</dbReference>
<dbReference type="CDD" id="cd02393">
    <property type="entry name" value="KH-I_PNPase"/>
    <property type="match status" value="1"/>
</dbReference>
<dbReference type="CDD" id="cd11363">
    <property type="entry name" value="RNase_PH_PNPase_1"/>
    <property type="match status" value="1"/>
</dbReference>
<dbReference type="CDD" id="cd11364">
    <property type="entry name" value="RNase_PH_PNPase_2"/>
    <property type="match status" value="1"/>
</dbReference>
<dbReference type="CDD" id="cd04472">
    <property type="entry name" value="S1_PNPase"/>
    <property type="match status" value="1"/>
</dbReference>
<dbReference type="FunFam" id="2.40.50.140:FF:000023">
    <property type="entry name" value="Polyribonucleotide nucleotidyltransferase"/>
    <property type="match status" value="1"/>
</dbReference>
<dbReference type="FunFam" id="3.30.1370.10:FF:000001">
    <property type="entry name" value="Polyribonucleotide nucleotidyltransferase"/>
    <property type="match status" value="1"/>
</dbReference>
<dbReference type="FunFam" id="3.30.230.70:FF:000001">
    <property type="entry name" value="Polyribonucleotide nucleotidyltransferase"/>
    <property type="match status" value="1"/>
</dbReference>
<dbReference type="FunFam" id="3.30.230.70:FF:000002">
    <property type="entry name" value="Polyribonucleotide nucleotidyltransferase"/>
    <property type="match status" value="1"/>
</dbReference>
<dbReference type="Gene3D" id="3.30.230.70">
    <property type="entry name" value="GHMP Kinase, N-terminal domain"/>
    <property type="match status" value="2"/>
</dbReference>
<dbReference type="Gene3D" id="3.30.1370.10">
    <property type="entry name" value="K Homology domain, type 1"/>
    <property type="match status" value="1"/>
</dbReference>
<dbReference type="Gene3D" id="2.40.50.140">
    <property type="entry name" value="Nucleic acid-binding proteins"/>
    <property type="match status" value="1"/>
</dbReference>
<dbReference type="HAMAP" id="MF_01595">
    <property type="entry name" value="PNPase"/>
    <property type="match status" value="1"/>
</dbReference>
<dbReference type="InterPro" id="IPR001247">
    <property type="entry name" value="ExoRNase_PH_dom1"/>
</dbReference>
<dbReference type="InterPro" id="IPR015847">
    <property type="entry name" value="ExoRNase_PH_dom2"/>
</dbReference>
<dbReference type="InterPro" id="IPR036345">
    <property type="entry name" value="ExoRNase_PH_dom2_sf"/>
</dbReference>
<dbReference type="InterPro" id="IPR004087">
    <property type="entry name" value="KH_dom"/>
</dbReference>
<dbReference type="InterPro" id="IPR004088">
    <property type="entry name" value="KH_dom_type_1"/>
</dbReference>
<dbReference type="InterPro" id="IPR036612">
    <property type="entry name" value="KH_dom_type_1_sf"/>
</dbReference>
<dbReference type="InterPro" id="IPR012340">
    <property type="entry name" value="NA-bd_OB-fold"/>
</dbReference>
<dbReference type="InterPro" id="IPR012162">
    <property type="entry name" value="PNPase"/>
</dbReference>
<dbReference type="InterPro" id="IPR027408">
    <property type="entry name" value="PNPase/RNase_PH_dom_sf"/>
</dbReference>
<dbReference type="InterPro" id="IPR015848">
    <property type="entry name" value="PNPase_PH_RNA-bd_bac/org-type"/>
</dbReference>
<dbReference type="InterPro" id="IPR036456">
    <property type="entry name" value="PNPase_PH_RNA-bd_sf"/>
</dbReference>
<dbReference type="InterPro" id="IPR020568">
    <property type="entry name" value="Ribosomal_Su5_D2-typ_SF"/>
</dbReference>
<dbReference type="InterPro" id="IPR003029">
    <property type="entry name" value="S1_domain"/>
</dbReference>
<dbReference type="NCBIfam" id="TIGR03591">
    <property type="entry name" value="polynuc_phos"/>
    <property type="match status" value="1"/>
</dbReference>
<dbReference type="NCBIfam" id="NF008805">
    <property type="entry name" value="PRK11824.1"/>
    <property type="match status" value="1"/>
</dbReference>
<dbReference type="PANTHER" id="PTHR11252">
    <property type="entry name" value="POLYRIBONUCLEOTIDE NUCLEOTIDYLTRANSFERASE"/>
    <property type="match status" value="1"/>
</dbReference>
<dbReference type="PANTHER" id="PTHR11252:SF0">
    <property type="entry name" value="POLYRIBONUCLEOTIDE NUCLEOTIDYLTRANSFERASE 1, MITOCHONDRIAL"/>
    <property type="match status" value="1"/>
</dbReference>
<dbReference type="Pfam" id="PF00013">
    <property type="entry name" value="KH_1"/>
    <property type="match status" value="1"/>
</dbReference>
<dbReference type="Pfam" id="PF03726">
    <property type="entry name" value="PNPase"/>
    <property type="match status" value="1"/>
</dbReference>
<dbReference type="Pfam" id="PF01138">
    <property type="entry name" value="RNase_PH"/>
    <property type="match status" value="2"/>
</dbReference>
<dbReference type="Pfam" id="PF03725">
    <property type="entry name" value="RNase_PH_C"/>
    <property type="match status" value="2"/>
</dbReference>
<dbReference type="Pfam" id="PF00575">
    <property type="entry name" value="S1"/>
    <property type="match status" value="1"/>
</dbReference>
<dbReference type="PIRSF" id="PIRSF005499">
    <property type="entry name" value="PNPase"/>
    <property type="match status" value="1"/>
</dbReference>
<dbReference type="SMART" id="SM00322">
    <property type="entry name" value="KH"/>
    <property type="match status" value="1"/>
</dbReference>
<dbReference type="SMART" id="SM00316">
    <property type="entry name" value="S1"/>
    <property type="match status" value="1"/>
</dbReference>
<dbReference type="SUPFAM" id="SSF54791">
    <property type="entry name" value="Eukaryotic type KH-domain (KH-domain type I)"/>
    <property type="match status" value="1"/>
</dbReference>
<dbReference type="SUPFAM" id="SSF50249">
    <property type="entry name" value="Nucleic acid-binding proteins"/>
    <property type="match status" value="1"/>
</dbReference>
<dbReference type="SUPFAM" id="SSF46915">
    <property type="entry name" value="Polynucleotide phosphorylase/guanosine pentaphosphate synthase (PNPase/GPSI), domain 3"/>
    <property type="match status" value="1"/>
</dbReference>
<dbReference type="SUPFAM" id="SSF55666">
    <property type="entry name" value="Ribonuclease PH domain 2-like"/>
    <property type="match status" value="2"/>
</dbReference>
<dbReference type="SUPFAM" id="SSF54211">
    <property type="entry name" value="Ribosomal protein S5 domain 2-like"/>
    <property type="match status" value="2"/>
</dbReference>
<dbReference type="PROSITE" id="PS50084">
    <property type="entry name" value="KH_TYPE_1"/>
    <property type="match status" value="1"/>
</dbReference>
<dbReference type="PROSITE" id="PS50126">
    <property type="entry name" value="S1"/>
    <property type="match status" value="1"/>
</dbReference>